<name>NHAA_SALPB</name>
<gene>
    <name evidence="1" type="primary">nhaA</name>
    <name type="ordered locus">SPAB_00049</name>
</gene>
<sequence length="388" mass="41351">MKHLHRFFSSDASGGIILIIAAALAMLMANMGATSGWYHDFLETPVQLRVGALEINKNMLLWINDALMAVFFLLIGLEVKRELMQGSLASLRQAAFPVIAAIGGMIVPALLYLAFNYSDPVTREGWAIPAATDIAFALGVLALLGSRVPLALKIFLMALAIIDDLGAIVIIALFYTSDLSIVSLGVAAFAIAVLALLNLCGVRRTGVYILVGAVLWTAVLKSGVHATLAGVIVGFFIPLKEKHGRSPAKRLEHVLHPWVAYLILPLFAFANAGVSLQGVTIDGLTSMLPLGIIAGLLIGKPLGISLFCWLALRFKLAHLPQGTTYQQIMAVGILCGIGFTMSIFIASLAFGNVDPELINWAKLGILIGSLLSAVVGYSWLRARLNAPA</sequence>
<accession>A9MYF8</accession>
<proteinExistence type="inferred from homology"/>
<protein>
    <recommendedName>
        <fullName evidence="1">Na(+)/H(+) antiporter NhaA</fullName>
    </recommendedName>
    <alternativeName>
        <fullName evidence="1">Sodium/proton antiporter NhaA</fullName>
    </alternativeName>
</protein>
<reference key="1">
    <citation type="submission" date="2007-11" db="EMBL/GenBank/DDBJ databases">
        <authorList>
            <consortium name="The Salmonella enterica serovar Paratyphi B Genome Sequencing Project"/>
            <person name="McClelland M."/>
            <person name="Sanderson E.K."/>
            <person name="Porwollik S."/>
            <person name="Spieth J."/>
            <person name="Clifton W.S."/>
            <person name="Fulton R."/>
            <person name="Cordes M."/>
            <person name="Wollam A."/>
            <person name="Shah N."/>
            <person name="Pepin K."/>
            <person name="Bhonagiri V."/>
            <person name="Nash W."/>
            <person name="Johnson M."/>
            <person name="Thiruvilangam P."/>
            <person name="Wilson R."/>
        </authorList>
    </citation>
    <scope>NUCLEOTIDE SEQUENCE [LARGE SCALE GENOMIC DNA]</scope>
    <source>
        <strain>ATCC BAA-1250 / SPB7</strain>
    </source>
</reference>
<dbReference type="EMBL" id="CP000886">
    <property type="protein sequence ID" value="ABX65492.1"/>
    <property type="molecule type" value="Genomic_DNA"/>
</dbReference>
<dbReference type="RefSeq" id="WP_000681340.1">
    <property type="nucleotide sequence ID" value="NC_010102.1"/>
</dbReference>
<dbReference type="SMR" id="A9MYF8"/>
<dbReference type="KEGG" id="spq:SPAB_00049"/>
<dbReference type="PATRIC" id="fig|1016998.12.peg.48"/>
<dbReference type="HOGENOM" id="CLU_015803_1_0_6"/>
<dbReference type="BioCyc" id="SENT1016998:SPAB_RS00195-MONOMER"/>
<dbReference type="Proteomes" id="UP000008556">
    <property type="component" value="Chromosome"/>
</dbReference>
<dbReference type="GO" id="GO:0005886">
    <property type="term" value="C:plasma membrane"/>
    <property type="evidence" value="ECO:0007669"/>
    <property type="project" value="UniProtKB-SubCell"/>
</dbReference>
<dbReference type="GO" id="GO:0015385">
    <property type="term" value="F:sodium:proton antiporter activity"/>
    <property type="evidence" value="ECO:0007669"/>
    <property type="project" value="TreeGrafter"/>
</dbReference>
<dbReference type="GO" id="GO:0006885">
    <property type="term" value="P:regulation of pH"/>
    <property type="evidence" value="ECO:0007669"/>
    <property type="project" value="InterPro"/>
</dbReference>
<dbReference type="FunFam" id="1.20.1530.10:FF:000001">
    <property type="entry name" value="Na(+)/H(+) antiporter NhaA"/>
    <property type="match status" value="1"/>
</dbReference>
<dbReference type="Gene3D" id="1.20.1530.10">
    <property type="entry name" value="Na+/H+ antiporter like domain"/>
    <property type="match status" value="1"/>
</dbReference>
<dbReference type="HAMAP" id="MF_01844">
    <property type="entry name" value="NhaA"/>
    <property type="match status" value="1"/>
</dbReference>
<dbReference type="InterPro" id="IPR023171">
    <property type="entry name" value="Na/H_antiporter_dom_sf"/>
</dbReference>
<dbReference type="InterPro" id="IPR004670">
    <property type="entry name" value="NhaA"/>
</dbReference>
<dbReference type="NCBIfam" id="TIGR00773">
    <property type="entry name" value="NhaA"/>
    <property type="match status" value="1"/>
</dbReference>
<dbReference type="NCBIfam" id="NF007111">
    <property type="entry name" value="PRK09560.1"/>
    <property type="match status" value="1"/>
</dbReference>
<dbReference type="NCBIfam" id="NF007112">
    <property type="entry name" value="PRK09561.1"/>
    <property type="match status" value="1"/>
</dbReference>
<dbReference type="PANTHER" id="PTHR30341:SF0">
    <property type="entry name" value="NA(+)_H(+) ANTIPORTER NHAA"/>
    <property type="match status" value="1"/>
</dbReference>
<dbReference type="PANTHER" id="PTHR30341">
    <property type="entry name" value="SODIUM ION/PROTON ANTIPORTER NHAA-RELATED"/>
    <property type="match status" value="1"/>
</dbReference>
<dbReference type="Pfam" id="PF06965">
    <property type="entry name" value="Na_H_antiport_1"/>
    <property type="match status" value="1"/>
</dbReference>
<feature type="chain" id="PRO_0000334415" description="Na(+)/H(+) antiporter NhaA">
    <location>
        <begin position="1"/>
        <end position="388"/>
    </location>
</feature>
<feature type="transmembrane region" description="Helical" evidence="1">
    <location>
        <begin position="14"/>
        <end position="34"/>
    </location>
</feature>
<feature type="transmembrane region" description="Helical" evidence="1">
    <location>
        <begin position="59"/>
        <end position="79"/>
    </location>
</feature>
<feature type="transmembrane region" description="Helical" evidence="1">
    <location>
        <begin position="95"/>
        <end position="115"/>
    </location>
</feature>
<feature type="transmembrane region" description="Helical" evidence="1">
    <location>
        <begin position="125"/>
        <end position="145"/>
    </location>
</feature>
<feature type="transmembrane region" description="Helical" evidence="1">
    <location>
        <begin position="154"/>
        <end position="174"/>
    </location>
</feature>
<feature type="transmembrane region" description="Helical" evidence="1">
    <location>
        <begin position="179"/>
        <end position="199"/>
    </location>
</feature>
<feature type="transmembrane region" description="Helical" evidence="1">
    <location>
        <begin position="219"/>
        <end position="239"/>
    </location>
</feature>
<feature type="transmembrane region" description="Helical" evidence="1">
    <location>
        <begin position="254"/>
        <end position="274"/>
    </location>
</feature>
<feature type="transmembrane region" description="Helical" evidence="1">
    <location>
        <begin position="292"/>
        <end position="312"/>
    </location>
</feature>
<feature type="transmembrane region" description="Helical" evidence="1">
    <location>
        <begin position="328"/>
        <end position="348"/>
    </location>
</feature>
<feature type="transmembrane region" description="Helical" evidence="1">
    <location>
        <begin position="360"/>
        <end position="380"/>
    </location>
</feature>
<organism>
    <name type="scientific">Salmonella paratyphi B (strain ATCC BAA-1250 / SPB7)</name>
    <dbReference type="NCBI Taxonomy" id="1016998"/>
    <lineage>
        <taxon>Bacteria</taxon>
        <taxon>Pseudomonadati</taxon>
        <taxon>Pseudomonadota</taxon>
        <taxon>Gammaproteobacteria</taxon>
        <taxon>Enterobacterales</taxon>
        <taxon>Enterobacteriaceae</taxon>
        <taxon>Salmonella</taxon>
    </lineage>
</organism>
<keyword id="KW-0050">Antiport</keyword>
<keyword id="KW-0997">Cell inner membrane</keyword>
<keyword id="KW-1003">Cell membrane</keyword>
<keyword id="KW-0406">Ion transport</keyword>
<keyword id="KW-0472">Membrane</keyword>
<keyword id="KW-0915">Sodium</keyword>
<keyword id="KW-0739">Sodium transport</keyword>
<keyword id="KW-0812">Transmembrane</keyword>
<keyword id="KW-1133">Transmembrane helix</keyword>
<keyword id="KW-0813">Transport</keyword>
<comment type="function">
    <text evidence="1">Na(+)/H(+) antiporter that extrudes sodium in exchange for external protons.</text>
</comment>
<comment type="catalytic activity">
    <reaction evidence="1">
        <text>Na(+)(in) + 2 H(+)(out) = Na(+)(out) + 2 H(+)(in)</text>
        <dbReference type="Rhea" id="RHEA:29251"/>
        <dbReference type="ChEBI" id="CHEBI:15378"/>
        <dbReference type="ChEBI" id="CHEBI:29101"/>
    </reaction>
    <physiologicalReaction direction="left-to-right" evidence="1">
        <dbReference type="Rhea" id="RHEA:29252"/>
    </physiologicalReaction>
</comment>
<comment type="subcellular location">
    <subcellularLocation>
        <location evidence="1">Cell inner membrane</location>
        <topology evidence="1">Multi-pass membrane protein</topology>
    </subcellularLocation>
</comment>
<comment type="similarity">
    <text evidence="1">Belongs to the NhaA Na(+)/H(+) (TC 2.A.33) antiporter family.</text>
</comment>
<evidence type="ECO:0000255" key="1">
    <source>
        <dbReference type="HAMAP-Rule" id="MF_01844"/>
    </source>
</evidence>